<name>CELF4_DANRE</name>
<proteinExistence type="evidence at transcript level"/>
<dbReference type="EMBL" id="BC076238">
    <property type="protein sequence ID" value="AAH76238.1"/>
    <property type="molecule type" value="mRNA"/>
</dbReference>
<dbReference type="RefSeq" id="NP_001002562.1">
    <property type="nucleotide sequence ID" value="NM_001002562.2"/>
</dbReference>
<dbReference type="SMR" id="Q6DGV1"/>
<dbReference type="FunCoup" id="Q6DGV1">
    <property type="interactions" value="374"/>
</dbReference>
<dbReference type="STRING" id="7955.ENSDARP00000075951"/>
<dbReference type="PaxDb" id="7955-ENSDARP00000122295"/>
<dbReference type="Ensembl" id="ENSDART00000081510">
    <property type="protein sequence ID" value="ENSDARP00000075951"/>
    <property type="gene ID" value="ENSDARG00000070045"/>
</dbReference>
<dbReference type="GeneID" id="436835"/>
<dbReference type="KEGG" id="dre:436835"/>
<dbReference type="AGR" id="ZFIN:ZDB-GENE-040718-300"/>
<dbReference type="CTD" id="56853"/>
<dbReference type="ZFIN" id="ZDB-GENE-040718-300">
    <property type="gene designation" value="celf4"/>
</dbReference>
<dbReference type="eggNOG" id="KOG0146">
    <property type="taxonomic scope" value="Eukaryota"/>
</dbReference>
<dbReference type="InParanoid" id="Q6DGV1"/>
<dbReference type="OMA" id="FTGMHKX"/>
<dbReference type="OrthoDB" id="410044at2759"/>
<dbReference type="PhylomeDB" id="Q6DGV1"/>
<dbReference type="PRO" id="PR:Q6DGV1"/>
<dbReference type="Proteomes" id="UP000000437">
    <property type="component" value="Chromosome 21"/>
</dbReference>
<dbReference type="Bgee" id="ENSDARG00000070045">
    <property type="expression patterns" value="Expressed in brain and 9 other cell types or tissues"/>
</dbReference>
<dbReference type="ExpressionAtlas" id="Q6DGV1">
    <property type="expression patterns" value="baseline and differential"/>
</dbReference>
<dbReference type="GO" id="GO:0005737">
    <property type="term" value="C:cytoplasm"/>
    <property type="evidence" value="ECO:0000318"/>
    <property type="project" value="GO_Central"/>
</dbReference>
<dbReference type="GO" id="GO:0005634">
    <property type="term" value="C:nucleus"/>
    <property type="evidence" value="ECO:0000318"/>
    <property type="project" value="GO_Central"/>
</dbReference>
<dbReference type="GO" id="GO:1990904">
    <property type="term" value="C:ribonucleoprotein complex"/>
    <property type="evidence" value="ECO:0000318"/>
    <property type="project" value="GO_Central"/>
</dbReference>
<dbReference type="GO" id="GO:0003729">
    <property type="term" value="F:mRNA binding"/>
    <property type="evidence" value="ECO:0000318"/>
    <property type="project" value="GO_Central"/>
</dbReference>
<dbReference type="GO" id="GO:0006376">
    <property type="term" value="P:mRNA splice site recognition"/>
    <property type="evidence" value="ECO:0000318"/>
    <property type="project" value="GO_Central"/>
</dbReference>
<dbReference type="GO" id="GO:0048026">
    <property type="term" value="P:positive regulation of mRNA splicing, via spliceosome"/>
    <property type="evidence" value="ECO:0000250"/>
    <property type="project" value="UniProtKB"/>
</dbReference>
<dbReference type="GO" id="GO:0000381">
    <property type="term" value="P:regulation of alternative mRNA splicing, via spliceosome"/>
    <property type="evidence" value="ECO:0000318"/>
    <property type="project" value="GO_Central"/>
</dbReference>
<dbReference type="CDD" id="cd12632">
    <property type="entry name" value="RRM1_CELF3_4_5_6"/>
    <property type="match status" value="1"/>
</dbReference>
<dbReference type="CDD" id="cd12635">
    <property type="entry name" value="RRM2_CELF3_4_5_6"/>
    <property type="match status" value="1"/>
</dbReference>
<dbReference type="CDD" id="cd12639">
    <property type="entry name" value="RRM3_CELF3_4_5_6"/>
    <property type="match status" value="1"/>
</dbReference>
<dbReference type="FunFam" id="3.30.70.330:FF:000007">
    <property type="entry name" value="CUGBP Elav-like family member 4 isoform 3"/>
    <property type="match status" value="1"/>
</dbReference>
<dbReference type="FunFam" id="3.30.70.330:FF:000010">
    <property type="entry name" value="CUGBP Elav-like family member 4 isoform 3"/>
    <property type="match status" value="1"/>
</dbReference>
<dbReference type="FunFam" id="3.30.70.330:FF:000069">
    <property type="entry name" value="CUGBP Elav-like family member 5 isoform X1"/>
    <property type="match status" value="1"/>
</dbReference>
<dbReference type="Gene3D" id="3.30.70.330">
    <property type="match status" value="3"/>
</dbReference>
<dbReference type="InterPro" id="IPR034648">
    <property type="entry name" value="CELF3/4/5/6_RRM1"/>
</dbReference>
<dbReference type="InterPro" id="IPR012677">
    <property type="entry name" value="Nucleotide-bd_a/b_plait_sf"/>
</dbReference>
<dbReference type="InterPro" id="IPR035979">
    <property type="entry name" value="RBD_domain_sf"/>
</dbReference>
<dbReference type="InterPro" id="IPR000504">
    <property type="entry name" value="RRM_dom"/>
</dbReference>
<dbReference type="PANTHER" id="PTHR24012">
    <property type="entry name" value="RNA BINDING PROTEIN"/>
    <property type="match status" value="1"/>
</dbReference>
<dbReference type="Pfam" id="PF00076">
    <property type="entry name" value="RRM_1"/>
    <property type="match status" value="3"/>
</dbReference>
<dbReference type="SMART" id="SM00360">
    <property type="entry name" value="RRM"/>
    <property type="match status" value="3"/>
</dbReference>
<dbReference type="SUPFAM" id="SSF54928">
    <property type="entry name" value="RNA-binding domain, RBD"/>
    <property type="match status" value="2"/>
</dbReference>
<dbReference type="PROSITE" id="PS50102">
    <property type="entry name" value="RRM"/>
    <property type="match status" value="3"/>
</dbReference>
<evidence type="ECO:0000250" key="1"/>
<evidence type="ECO:0000255" key="2">
    <source>
        <dbReference type="PROSITE-ProRule" id="PRU00176"/>
    </source>
</evidence>
<evidence type="ECO:0000305" key="3"/>
<accession>Q6DGV1</accession>
<protein>
    <recommendedName>
        <fullName>CUGBP Elav-like family member 4</fullName>
        <shortName>CELF-4</shortName>
    </recommendedName>
    <alternativeName>
        <fullName>Bruno-like protein 4</fullName>
    </alternativeName>
    <alternativeName>
        <fullName>CUG-BP- and ETR-3-like factor 4</fullName>
    </alternativeName>
    <alternativeName>
        <fullName>RNA-binding protein BRUNOL-4</fullName>
    </alternativeName>
</protein>
<comment type="function">
    <text evidence="1">RNA-binding protein that may be implicated in the regulation of pre-mRNA alternative splicing.</text>
</comment>
<comment type="subcellular location">
    <subcellularLocation>
        <location evidence="1">Nucleus</location>
    </subcellularLocation>
    <subcellularLocation>
        <location evidence="1">Cytoplasm</location>
    </subcellularLocation>
</comment>
<comment type="similarity">
    <text evidence="3">Belongs to the CELF/BRUNOL family.</text>
</comment>
<feature type="chain" id="PRO_0000295225" description="CUGBP Elav-like family member 4">
    <location>
        <begin position="1"/>
        <end position="520"/>
    </location>
</feature>
<feature type="domain" description="RRM 1" evidence="2">
    <location>
        <begin position="47"/>
        <end position="128"/>
    </location>
</feature>
<feature type="domain" description="RRM 2" evidence="2">
    <location>
        <begin position="135"/>
        <end position="215"/>
    </location>
</feature>
<feature type="domain" description="RRM 3" evidence="2">
    <location>
        <begin position="435"/>
        <end position="513"/>
    </location>
</feature>
<sequence length="520" mass="55726">MATLTNGQVDAAVHGGAASTNGLVNGISHTHSPASCATIPMKDHDAIKLFIGQIPRNLDEKDLRPLFEEFGKIYELTVLKDRFTGMHKGCAFLTYCARESALKAQTALHEQKTLPGMNRPIQVKPADSESRGEDRKLFVGMLNKQQCEDDVRRLFESFGSIEECTILRGPDGNSKGCAFVKYSTHAEAQAAISALHGSQTMPGASSSLVVKFADTDKERTIRRMQQMAGQMGIFNPMALQFGAYGAYAQVQQQAALMASVGQGGYLSPMAAFAAAQMQHMATINGLPGAPMTPTSGGSTPPGITAPTVTSIPSPISVNGFTGLPPPQANGQAPAEAMFTNGIHPYPVLQEVVFREDSEKGGLGVAQRSCFGVQGSCFLSSLSEAQSPTAADPLQQAYAGVQQYAAFPAAYGQISQAFPQPPPIIPQQQREGPEGCNLFIYHLPQEFGDGELMQMFLPFGNVISSKVFVDRATNQSKCFGFVSFDNPGSAQAAIQSMNGFQIGMKRLKVQLKRPKDANRPY</sequence>
<reference key="1">
    <citation type="submission" date="2004-07" db="EMBL/GenBank/DDBJ databases">
        <authorList>
            <consortium name="NIH - Zebrafish Gene Collection (ZGC) project"/>
        </authorList>
    </citation>
    <scope>NUCLEOTIDE SEQUENCE [LARGE SCALE MRNA]</scope>
    <source>
        <tissue>Brain</tissue>
    </source>
</reference>
<organism>
    <name type="scientific">Danio rerio</name>
    <name type="common">Zebrafish</name>
    <name type="synonym">Brachydanio rerio</name>
    <dbReference type="NCBI Taxonomy" id="7955"/>
    <lineage>
        <taxon>Eukaryota</taxon>
        <taxon>Metazoa</taxon>
        <taxon>Chordata</taxon>
        <taxon>Craniata</taxon>
        <taxon>Vertebrata</taxon>
        <taxon>Euteleostomi</taxon>
        <taxon>Actinopterygii</taxon>
        <taxon>Neopterygii</taxon>
        <taxon>Teleostei</taxon>
        <taxon>Ostariophysi</taxon>
        <taxon>Cypriniformes</taxon>
        <taxon>Danionidae</taxon>
        <taxon>Danioninae</taxon>
        <taxon>Danio</taxon>
    </lineage>
</organism>
<gene>
    <name type="primary">celf4</name>
    <name type="synonym">brunol4</name>
    <name type="ORF">zgc:92761</name>
</gene>
<keyword id="KW-0963">Cytoplasm</keyword>
<keyword id="KW-0507">mRNA processing</keyword>
<keyword id="KW-0539">Nucleus</keyword>
<keyword id="KW-1185">Reference proteome</keyword>
<keyword id="KW-0677">Repeat</keyword>
<keyword id="KW-0694">RNA-binding</keyword>